<proteinExistence type="evidence at protein level"/>
<reference key="1">
    <citation type="journal article" date="2001" name="Lancet">
        <title>Whole genome sequencing of meticillin-resistant Staphylococcus aureus.</title>
        <authorList>
            <person name="Kuroda M."/>
            <person name="Ohta T."/>
            <person name="Uchiyama I."/>
            <person name="Baba T."/>
            <person name="Yuzawa H."/>
            <person name="Kobayashi I."/>
            <person name="Cui L."/>
            <person name="Oguchi A."/>
            <person name="Aoki K."/>
            <person name="Nagai Y."/>
            <person name="Lian J.-Q."/>
            <person name="Ito T."/>
            <person name="Kanamori M."/>
            <person name="Matsumaru H."/>
            <person name="Maruyama A."/>
            <person name="Murakami H."/>
            <person name="Hosoyama A."/>
            <person name="Mizutani-Ui Y."/>
            <person name="Takahashi N.K."/>
            <person name="Sawano T."/>
            <person name="Inoue R."/>
            <person name="Kaito C."/>
            <person name="Sekimizu K."/>
            <person name="Hirakawa H."/>
            <person name="Kuhara S."/>
            <person name="Goto S."/>
            <person name="Yabuzaki J."/>
            <person name="Kanehisa M."/>
            <person name="Yamashita A."/>
            <person name="Oshima K."/>
            <person name="Furuya K."/>
            <person name="Yoshino C."/>
            <person name="Shiba T."/>
            <person name="Hattori M."/>
            <person name="Ogasawara N."/>
            <person name="Hayashi H."/>
            <person name="Hiramatsu K."/>
        </authorList>
    </citation>
    <scope>NUCLEOTIDE SEQUENCE [LARGE SCALE GENOMIC DNA]</scope>
    <source>
        <strain>N315</strain>
    </source>
</reference>
<reference key="2">
    <citation type="journal article" date="2005" name="J. Microbiol. Methods">
        <title>Correlation of proteomic and transcriptomic profiles of Staphylococcus aureus during the post-exponential phase of growth.</title>
        <authorList>
            <person name="Scherl A."/>
            <person name="Francois P."/>
            <person name="Bento M."/>
            <person name="Deshusses J.M."/>
            <person name="Charbonnier Y."/>
            <person name="Converset V."/>
            <person name="Huyghe A."/>
            <person name="Walter N."/>
            <person name="Hoogland C."/>
            <person name="Appel R.D."/>
            <person name="Sanchez J.-C."/>
            <person name="Zimmermann-Ivol C.G."/>
            <person name="Corthals G.L."/>
            <person name="Hochstrasser D.F."/>
            <person name="Schrenzel J."/>
        </authorList>
    </citation>
    <scope>IDENTIFICATION BY MASS SPECTROMETRY</scope>
    <source>
        <strain>N315</strain>
    </source>
</reference>
<reference key="3">
    <citation type="submission" date="2007-10" db="UniProtKB">
        <title>Shotgun proteomic analysis of total and membrane protein extracts of S. aureus strain N315.</title>
        <authorList>
            <person name="Vaezzadeh A.R."/>
            <person name="Deshusses J."/>
            <person name="Lescuyer P."/>
            <person name="Hochstrasser D.F."/>
        </authorList>
    </citation>
    <scope>IDENTIFICATION BY MASS SPECTROMETRY [LARGE SCALE ANALYSIS]</scope>
    <source>
        <strain>N315</strain>
    </source>
</reference>
<feature type="chain" id="PRO_0000137046" description="Nucleoside diphosphate kinase">
    <location>
        <begin position="1"/>
        <end position="149"/>
    </location>
</feature>
<feature type="active site" description="Pros-phosphohistidine intermediate" evidence="1">
    <location>
        <position position="115"/>
    </location>
</feature>
<feature type="binding site" evidence="1">
    <location>
        <position position="9"/>
    </location>
    <ligand>
        <name>ATP</name>
        <dbReference type="ChEBI" id="CHEBI:30616"/>
    </ligand>
</feature>
<feature type="binding site" evidence="1">
    <location>
        <position position="57"/>
    </location>
    <ligand>
        <name>ATP</name>
        <dbReference type="ChEBI" id="CHEBI:30616"/>
    </ligand>
</feature>
<feature type="binding site" evidence="1">
    <location>
        <position position="85"/>
    </location>
    <ligand>
        <name>ATP</name>
        <dbReference type="ChEBI" id="CHEBI:30616"/>
    </ligand>
</feature>
<feature type="binding site" evidence="1">
    <location>
        <position position="91"/>
    </location>
    <ligand>
        <name>ATP</name>
        <dbReference type="ChEBI" id="CHEBI:30616"/>
    </ligand>
</feature>
<feature type="binding site" evidence="1">
    <location>
        <position position="102"/>
    </location>
    <ligand>
        <name>ATP</name>
        <dbReference type="ChEBI" id="CHEBI:30616"/>
    </ligand>
</feature>
<feature type="binding site" evidence="1">
    <location>
        <position position="112"/>
    </location>
    <ligand>
        <name>ATP</name>
        <dbReference type="ChEBI" id="CHEBI:30616"/>
    </ligand>
</feature>
<comment type="function">
    <text evidence="1">Major role in the synthesis of nucleoside triphosphates other than ATP. The ATP gamma phosphate is transferred to the NDP beta phosphate via a ping-pong mechanism, using a phosphorylated active-site intermediate.</text>
</comment>
<comment type="catalytic activity">
    <reaction evidence="1">
        <text>a 2'-deoxyribonucleoside 5'-diphosphate + ATP = a 2'-deoxyribonucleoside 5'-triphosphate + ADP</text>
        <dbReference type="Rhea" id="RHEA:44640"/>
        <dbReference type="ChEBI" id="CHEBI:30616"/>
        <dbReference type="ChEBI" id="CHEBI:61560"/>
        <dbReference type="ChEBI" id="CHEBI:73316"/>
        <dbReference type="ChEBI" id="CHEBI:456216"/>
        <dbReference type="EC" id="2.7.4.6"/>
    </reaction>
</comment>
<comment type="catalytic activity">
    <reaction evidence="1">
        <text>a ribonucleoside 5'-diphosphate + ATP = a ribonucleoside 5'-triphosphate + ADP</text>
        <dbReference type="Rhea" id="RHEA:18113"/>
        <dbReference type="ChEBI" id="CHEBI:30616"/>
        <dbReference type="ChEBI" id="CHEBI:57930"/>
        <dbReference type="ChEBI" id="CHEBI:61557"/>
        <dbReference type="ChEBI" id="CHEBI:456216"/>
        <dbReference type="EC" id="2.7.4.6"/>
    </reaction>
</comment>
<comment type="cofactor">
    <cofactor evidence="1">
        <name>Mg(2+)</name>
        <dbReference type="ChEBI" id="CHEBI:18420"/>
    </cofactor>
</comment>
<comment type="subunit">
    <text evidence="1">Homotetramer.</text>
</comment>
<comment type="subcellular location">
    <subcellularLocation>
        <location evidence="1">Cytoplasm</location>
    </subcellularLocation>
</comment>
<comment type="similarity">
    <text evidence="1 2">Belongs to the NDK family.</text>
</comment>
<sequence length="149" mass="16575">MERTFLMIKPDAVQRNLIGEVISRIERKGLKLVGGKLMQVPMELAETHYGEHQGKPFYNDLISFITSAPVFAMVVEGEDAVNVSRHIIGSTNPSEASPGSIRGDLGLTVGRNIIHGSDSLESAEREINLWFNENEITSYASPRDAWLYE</sequence>
<gene>
    <name evidence="1" type="primary">ndk</name>
    <name type="ordered locus">SA1301</name>
</gene>
<organism>
    <name type="scientific">Staphylococcus aureus (strain N315)</name>
    <dbReference type="NCBI Taxonomy" id="158879"/>
    <lineage>
        <taxon>Bacteria</taxon>
        <taxon>Bacillati</taxon>
        <taxon>Bacillota</taxon>
        <taxon>Bacilli</taxon>
        <taxon>Bacillales</taxon>
        <taxon>Staphylococcaceae</taxon>
        <taxon>Staphylococcus</taxon>
    </lineage>
</organism>
<name>NDK_STAAN</name>
<protein>
    <recommendedName>
        <fullName evidence="1">Nucleoside diphosphate kinase</fullName>
        <shortName evidence="1">NDK</shortName>
        <shortName evidence="1">NDP kinase</shortName>
        <ecNumber evidence="1">2.7.4.6</ecNumber>
    </recommendedName>
    <alternativeName>
        <fullName evidence="1">Nucleoside-2-P kinase</fullName>
    </alternativeName>
</protein>
<dbReference type="EC" id="2.7.4.6" evidence="1"/>
<dbReference type="EMBL" id="BA000018">
    <property type="protein sequence ID" value="BAB42562.1"/>
    <property type="molecule type" value="Genomic_DNA"/>
</dbReference>
<dbReference type="PIR" id="E89925">
    <property type="entry name" value="E89925"/>
</dbReference>
<dbReference type="RefSeq" id="WP_000442480.1">
    <property type="nucleotide sequence ID" value="NC_002745.2"/>
</dbReference>
<dbReference type="SMR" id="P99068"/>
<dbReference type="EnsemblBacteria" id="BAB42562">
    <property type="protein sequence ID" value="BAB42562"/>
    <property type="gene ID" value="BAB42562"/>
</dbReference>
<dbReference type="GeneID" id="66839658"/>
<dbReference type="KEGG" id="sau:SA1301"/>
<dbReference type="HOGENOM" id="CLU_060216_6_3_9"/>
<dbReference type="GO" id="GO:0005737">
    <property type="term" value="C:cytoplasm"/>
    <property type="evidence" value="ECO:0007669"/>
    <property type="project" value="UniProtKB-SubCell"/>
</dbReference>
<dbReference type="GO" id="GO:0005524">
    <property type="term" value="F:ATP binding"/>
    <property type="evidence" value="ECO:0007669"/>
    <property type="project" value="UniProtKB-UniRule"/>
</dbReference>
<dbReference type="GO" id="GO:0046872">
    <property type="term" value="F:metal ion binding"/>
    <property type="evidence" value="ECO:0007669"/>
    <property type="project" value="UniProtKB-KW"/>
</dbReference>
<dbReference type="GO" id="GO:0004550">
    <property type="term" value="F:nucleoside diphosphate kinase activity"/>
    <property type="evidence" value="ECO:0007669"/>
    <property type="project" value="UniProtKB-UniRule"/>
</dbReference>
<dbReference type="GO" id="GO:0006241">
    <property type="term" value="P:CTP biosynthetic process"/>
    <property type="evidence" value="ECO:0007669"/>
    <property type="project" value="UniProtKB-UniRule"/>
</dbReference>
<dbReference type="GO" id="GO:0006183">
    <property type="term" value="P:GTP biosynthetic process"/>
    <property type="evidence" value="ECO:0007669"/>
    <property type="project" value="UniProtKB-UniRule"/>
</dbReference>
<dbReference type="GO" id="GO:0006228">
    <property type="term" value="P:UTP biosynthetic process"/>
    <property type="evidence" value="ECO:0007669"/>
    <property type="project" value="UniProtKB-UniRule"/>
</dbReference>
<dbReference type="CDD" id="cd04413">
    <property type="entry name" value="NDPk_I"/>
    <property type="match status" value="1"/>
</dbReference>
<dbReference type="FunFam" id="3.30.70.141:FF:000002">
    <property type="entry name" value="Nucleoside diphosphate kinase"/>
    <property type="match status" value="1"/>
</dbReference>
<dbReference type="Gene3D" id="3.30.70.141">
    <property type="entry name" value="Nucleoside diphosphate kinase-like domain"/>
    <property type="match status" value="1"/>
</dbReference>
<dbReference type="HAMAP" id="MF_00451">
    <property type="entry name" value="NDP_kinase"/>
    <property type="match status" value="1"/>
</dbReference>
<dbReference type="InterPro" id="IPR034907">
    <property type="entry name" value="NDK-like_dom"/>
</dbReference>
<dbReference type="InterPro" id="IPR036850">
    <property type="entry name" value="NDK-like_dom_sf"/>
</dbReference>
<dbReference type="InterPro" id="IPR001564">
    <property type="entry name" value="Nucleoside_diP_kinase"/>
</dbReference>
<dbReference type="InterPro" id="IPR023005">
    <property type="entry name" value="Nucleoside_diP_kinase_AS"/>
</dbReference>
<dbReference type="NCBIfam" id="NF001908">
    <property type="entry name" value="PRK00668.1"/>
    <property type="match status" value="1"/>
</dbReference>
<dbReference type="PANTHER" id="PTHR11349">
    <property type="entry name" value="NUCLEOSIDE DIPHOSPHATE KINASE"/>
    <property type="match status" value="1"/>
</dbReference>
<dbReference type="Pfam" id="PF00334">
    <property type="entry name" value="NDK"/>
    <property type="match status" value="1"/>
</dbReference>
<dbReference type="PRINTS" id="PR01243">
    <property type="entry name" value="NUCDPKINASE"/>
</dbReference>
<dbReference type="SMART" id="SM00562">
    <property type="entry name" value="NDK"/>
    <property type="match status" value="1"/>
</dbReference>
<dbReference type="SUPFAM" id="SSF54919">
    <property type="entry name" value="Nucleoside diphosphate kinase, NDK"/>
    <property type="match status" value="1"/>
</dbReference>
<dbReference type="PROSITE" id="PS00469">
    <property type="entry name" value="NDPK"/>
    <property type="match status" value="1"/>
</dbReference>
<dbReference type="PROSITE" id="PS51374">
    <property type="entry name" value="NDPK_LIKE"/>
    <property type="match status" value="1"/>
</dbReference>
<keyword id="KW-0067">ATP-binding</keyword>
<keyword id="KW-0963">Cytoplasm</keyword>
<keyword id="KW-0418">Kinase</keyword>
<keyword id="KW-0460">Magnesium</keyword>
<keyword id="KW-0479">Metal-binding</keyword>
<keyword id="KW-0546">Nucleotide metabolism</keyword>
<keyword id="KW-0547">Nucleotide-binding</keyword>
<keyword id="KW-0597">Phosphoprotein</keyword>
<keyword id="KW-0808">Transferase</keyword>
<evidence type="ECO:0000255" key="1">
    <source>
        <dbReference type="HAMAP-Rule" id="MF_00451"/>
    </source>
</evidence>
<evidence type="ECO:0000305" key="2"/>
<accession>P99068</accession>
<accession>P50588</accession>